<evidence type="ECO:0000255" key="1">
    <source>
        <dbReference type="HAMAP-Rule" id="MF_01818"/>
    </source>
</evidence>
<dbReference type="EC" id="3.1.26.11" evidence="1"/>
<dbReference type="EMBL" id="AP009484">
    <property type="protein sequence ID" value="BAH17860.1"/>
    <property type="molecule type" value="Genomic_DNA"/>
</dbReference>
<dbReference type="RefSeq" id="WP_012657058.1">
    <property type="nucleotide sequence ID" value="NC_011999.1"/>
</dbReference>
<dbReference type="SMR" id="B9E6P2"/>
<dbReference type="STRING" id="458233.MCCL_1153"/>
<dbReference type="KEGG" id="mcl:MCCL_1153"/>
<dbReference type="eggNOG" id="COG1234">
    <property type="taxonomic scope" value="Bacteria"/>
</dbReference>
<dbReference type="HOGENOM" id="CLU_031317_2_0_9"/>
<dbReference type="OrthoDB" id="9800940at2"/>
<dbReference type="Proteomes" id="UP000001383">
    <property type="component" value="Chromosome"/>
</dbReference>
<dbReference type="GO" id="GO:0042781">
    <property type="term" value="F:3'-tRNA processing endoribonuclease activity"/>
    <property type="evidence" value="ECO:0007669"/>
    <property type="project" value="UniProtKB-UniRule"/>
</dbReference>
<dbReference type="GO" id="GO:0008270">
    <property type="term" value="F:zinc ion binding"/>
    <property type="evidence" value="ECO:0007669"/>
    <property type="project" value="UniProtKB-UniRule"/>
</dbReference>
<dbReference type="CDD" id="cd07717">
    <property type="entry name" value="RNaseZ_ZiPD-like_MBL-fold"/>
    <property type="match status" value="1"/>
</dbReference>
<dbReference type="FunFam" id="3.60.15.10:FF:000002">
    <property type="entry name" value="Ribonuclease Z"/>
    <property type="match status" value="1"/>
</dbReference>
<dbReference type="Gene3D" id="3.60.15.10">
    <property type="entry name" value="Ribonuclease Z/Hydroxyacylglutathione hydrolase-like"/>
    <property type="match status" value="1"/>
</dbReference>
<dbReference type="HAMAP" id="MF_01818">
    <property type="entry name" value="RNase_Z_BN"/>
    <property type="match status" value="1"/>
</dbReference>
<dbReference type="InterPro" id="IPR001279">
    <property type="entry name" value="Metallo-B-lactamas"/>
</dbReference>
<dbReference type="InterPro" id="IPR036866">
    <property type="entry name" value="RibonucZ/Hydroxyglut_hydro"/>
</dbReference>
<dbReference type="InterPro" id="IPR013471">
    <property type="entry name" value="RNase_Z/BN"/>
</dbReference>
<dbReference type="NCBIfam" id="NF000801">
    <property type="entry name" value="PRK00055.1-3"/>
    <property type="match status" value="1"/>
</dbReference>
<dbReference type="NCBIfam" id="TIGR02651">
    <property type="entry name" value="RNase_Z"/>
    <property type="match status" value="1"/>
</dbReference>
<dbReference type="PANTHER" id="PTHR46018">
    <property type="entry name" value="ZINC PHOSPHODIESTERASE ELAC PROTEIN 1"/>
    <property type="match status" value="1"/>
</dbReference>
<dbReference type="PANTHER" id="PTHR46018:SF2">
    <property type="entry name" value="ZINC PHOSPHODIESTERASE ELAC PROTEIN 1"/>
    <property type="match status" value="1"/>
</dbReference>
<dbReference type="Pfam" id="PF12706">
    <property type="entry name" value="Lactamase_B_2"/>
    <property type="match status" value="1"/>
</dbReference>
<dbReference type="SUPFAM" id="SSF56281">
    <property type="entry name" value="Metallo-hydrolase/oxidoreductase"/>
    <property type="match status" value="1"/>
</dbReference>
<reference key="1">
    <citation type="journal article" date="2009" name="J. Bacteriol.">
        <title>Complete genome sequence of Macrococcus caseolyticus strain JCSCS5402, reflecting the ancestral genome of the human-pathogenic staphylococci.</title>
        <authorList>
            <person name="Baba T."/>
            <person name="Kuwahara-Arai K."/>
            <person name="Uchiyama I."/>
            <person name="Takeuchi F."/>
            <person name="Ito T."/>
            <person name="Hiramatsu K."/>
        </authorList>
    </citation>
    <scope>NUCLEOTIDE SEQUENCE [LARGE SCALE GENOMIC DNA]</scope>
    <source>
        <strain>JCSC5402</strain>
    </source>
</reference>
<comment type="function">
    <text evidence="1">Zinc phosphodiesterase, which displays some tRNA 3'-processing endonuclease activity. Probably involved in tRNA maturation, by removing a 3'-trailer from precursor tRNA.</text>
</comment>
<comment type="catalytic activity">
    <reaction evidence="1">
        <text>Endonucleolytic cleavage of RNA, removing extra 3' nucleotides from tRNA precursor, generating 3' termini of tRNAs. A 3'-hydroxy group is left at the tRNA terminus and a 5'-phosphoryl group is left at the trailer molecule.</text>
        <dbReference type="EC" id="3.1.26.11"/>
    </reaction>
</comment>
<comment type="cofactor">
    <cofactor evidence="1">
        <name>Zn(2+)</name>
        <dbReference type="ChEBI" id="CHEBI:29105"/>
    </cofactor>
    <text evidence="1">Binds 2 Zn(2+) ions.</text>
</comment>
<comment type="subunit">
    <text evidence="1">Homodimer.</text>
</comment>
<comment type="similarity">
    <text evidence="1">Belongs to the RNase Z family.</text>
</comment>
<keyword id="KW-0255">Endonuclease</keyword>
<keyword id="KW-0378">Hydrolase</keyword>
<keyword id="KW-0479">Metal-binding</keyword>
<keyword id="KW-0540">Nuclease</keyword>
<keyword id="KW-1185">Reference proteome</keyword>
<keyword id="KW-0819">tRNA processing</keyword>
<keyword id="KW-0862">Zinc</keyword>
<feature type="chain" id="PRO_1000187970" description="Ribonuclease Z">
    <location>
        <begin position="1"/>
        <end position="306"/>
    </location>
</feature>
<feature type="active site" description="Proton acceptor" evidence="1">
    <location>
        <position position="67"/>
    </location>
</feature>
<feature type="binding site" evidence="1">
    <location>
        <position position="63"/>
    </location>
    <ligand>
        <name>Zn(2+)</name>
        <dbReference type="ChEBI" id="CHEBI:29105"/>
        <label>1</label>
        <note>catalytic</note>
    </ligand>
</feature>
<feature type="binding site" evidence="1">
    <location>
        <position position="65"/>
    </location>
    <ligand>
        <name>Zn(2+)</name>
        <dbReference type="ChEBI" id="CHEBI:29105"/>
        <label>1</label>
        <note>catalytic</note>
    </ligand>
</feature>
<feature type="binding site" evidence="1">
    <location>
        <position position="67"/>
    </location>
    <ligand>
        <name>Zn(2+)</name>
        <dbReference type="ChEBI" id="CHEBI:29105"/>
        <label>2</label>
        <note>catalytic</note>
    </ligand>
</feature>
<feature type="binding site" evidence="1">
    <location>
        <position position="68"/>
    </location>
    <ligand>
        <name>Zn(2+)</name>
        <dbReference type="ChEBI" id="CHEBI:29105"/>
        <label>2</label>
        <note>catalytic</note>
    </ligand>
</feature>
<feature type="binding site" evidence="1">
    <location>
        <position position="141"/>
    </location>
    <ligand>
        <name>Zn(2+)</name>
        <dbReference type="ChEBI" id="CHEBI:29105"/>
        <label>1</label>
        <note>catalytic</note>
    </ligand>
</feature>
<feature type="binding site" evidence="1">
    <location>
        <position position="211"/>
    </location>
    <ligand>
        <name>Zn(2+)</name>
        <dbReference type="ChEBI" id="CHEBI:29105"/>
        <label>1</label>
        <note>catalytic</note>
    </ligand>
</feature>
<feature type="binding site" evidence="1">
    <location>
        <position position="211"/>
    </location>
    <ligand>
        <name>Zn(2+)</name>
        <dbReference type="ChEBI" id="CHEBI:29105"/>
        <label>2</label>
        <note>catalytic</note>
    </ligand>
</feature>
<feature type="binding site" evidence="1">
    <location>
        <position position="269"/>
    </location>
    <ligand>
        <name>Zn(2+)</name>
        <dbReference type="ChEBI" id="CHEBI:29105"/>
        <label>2</label>
        <note>catalytic</note>
    </ligand>
</feature>
<gene>
    <name evidence="1" type="primary">rnz</name>
    <name type="ordered locus">MCCL_1153</name>
</gene>
<organism>
    <name type="scientific">Macrococcus caseolyticus (strain JCSC5402)</name>
    <name type="common">Macrococcoides caseolyticum</name>
    <dbReference type="NCBI Taxonomy" id="458233"/>
    <lineage>
        <taxon>Bacteria</taxon>
        <taxon>Bacillati</taxon>
        <taxon>Bacillota</taxon>
        <taxon>Bacilli</taxon>
        <taxon>Bacillales</taxon>
        <taxon>Staphylococcaceae</taxon>
        <taxon>Macrococcoides</taxon>
    </lineage>
</organism>
<proteinExistence type="inferred from homology"/>
<accession>B9E6P2</accession>
<sequence>MKIICLGTSAGLPTKERNTQTTILSLNPLYNEYWMFDCGEAAQHQILHTSIKLGRLTHIFISHLHGDHIFGLPGVLTSRSFQGGQDKKLTLYGPTGLKQFVDTVLTISCSHLNYPLEIIEIDHGDEFVINDIEITVGALKHGIPSFGYRIVMPDTAGNLIKEKLIAEGIAPGPVYKEFKLHEQVTLNGKIYNTKDFKTAGKKGKKLVFFGDTMPCENEVSLAENADVVVHECTYLDGDVELSHKYCHSHIDDVLSLVSSGSVKKLIINHVSNRYTTKDINRLLAEINTKTECEVFIADDFYEYDIE</sequence>
<protein>
    <recommendedName>
        <fullName evidence="1">Ribonuclease Z</fullName>
        <shortName evidence="1">RNase Z</shortName>
        <ecNumber evidence="1">3.1.26.11</ecNumber>
    </recommendedName>
    <alternativeName>
        <fullName evidence="1">tRNA 3 endonuclease</fullName>
    </alternativeName>
    <alternativeName>
        <fullName evidence="1">tRNase Z</fullName>
    </alternativeName>
</protein>
<name>RNZ_MACCJ</name>